<protein>
    <recommendedName>
        <fullName>V-type proton ATPase subunit F</fullName>
        <shortName>V-ATPase subunit F</shortName>
    </recommendedName>
    <alternativeName>
        <fullName>V-ATPase 14 kDa subunit</fullName>
    </alternativeName>
    <alternativeName>
        <fullName>Vacuolar proton pump subunit F</fullName>
    </alternativeName>
</protein>
<sequence>MAGRGKLIAVIGDEDTVTGFLLGGIGELNKNRHPNFLVVEKDTTINEIEDTFRQFLNRDDIGIILINQYIAEMVRHALDAHQRSIPAVLEIPSKEHPYDAAKDSILRRARGMFTAEDLR</sequence>
<comment type="function">
    <text evidence="2">Subunit of the V1 complex of vacuolar(H+)-ATPase (V-ATPase), a multisubunit enzyme composed of a peripheral complex (V1) that hydrolyzes ATP and a membrane integral complex (V0) that translocates protons (PubMed:32764564). V-ATPase is responsible for acidifying and maintaining the pH of intracellular compartments and in some cell types, is targeted to the plasma membrane, where it is responsible for acidifying the extracellular environment (PubMed:32764564).</text>
</comment>
<comment type="subunit">
    <text evidence="2">V-ATPase is a heteromultimeric enzyme made up of two complexes: the ATP-hydrolytic V1 complex and the proton translocation V0 complex (PubMed:32764564). The V1 complex consists of three catalytic AB heterodimers that form a heterohexamer, three peripheral stalks each consisting of EG heterodimers, one central rotor including subunits D and F, and the regulatory subunits C and H (PubMed:32764564). The proton translocation complex V0 consists of the proton transport subunit a, a ring of proteolipid subunits c9c'', rotary subunit d, subunits e and f, and the accessory subunits ATP6AP1/Ac45 and ATP6AP2/PRR (PubMed:32764564).</text>
</comment>
<comment type="subcellular location">
    <subcellularLocation>
        <location evidence="1">Cytoplasmic vesicle</location>
        <location evidence="1">Secretory vesicle</location>
        <location evidence="1">Synaptic vesicle membrane</location>
        <topology evidence="3">Peripheral membrane protein</topology>
    </subcellularLocation>
    <subcellularLocation>
        <location evidence="2">Cytoplasmic vesicle</location>
        <location evidence="2">Clathrin-coated vesicle membrane</location>
        <topology evidence="3">Peripheral membrane protein</topology>
    </subcellularLocation>
</comment>
<comment type="tissue specificity">
    <text evidence="2">Expressed in brain (at protein level).</text>
</comment>
<comment type="similarity">
    <text evidence="3">Belongs to the V-ATPase F subunit family.</text>
</comment>
<organism>
    <name type="scientific">Bos taurus</name>
    <name type="common">Bovine</name>
    <dbReference type="NCBI Taxonomy" id="9913"/>
    <lineage>
        <taxon>Eukaryota</taxon>
        <taxon>Metazoa</taxon>
        <taxon>Chordata</taxon>
        <taxon>Craniata</taxon>
        <taxon>Vertebrata</taxon>
        <taxon>Euteleostomi</taxon>
        <taxon>Mammalia</taxon>
        <taxon>Eutheria</taxon>
        <taxon>Laurasiatheria</taxon>
        <taxon>Artiodactyla</taxon>
        <taxon>Ruminantia</taxon>
        <taxon>Pecora</taxon>
        <taxon>Bovidae</taxon>
        <taxon>Bovinae</taxon>
        <taxon>Bos</taxon>
    </lineage>
</organism>
<evidence type="ECO:0000250" key="1">
    <source>
        <dbReference type="UniProtKB" id="P50408"/>
    </source>
</evidence>
<evidence type="ECO:0000269" key="2">
    <source>
    </source>
</evidence>
<evidence type="ECO:0000305" key="3"/>
<evidence type="ECO:0007744" key="4">
    <source>
        <dbReference type="PDB" id="6XBW"/>
    </source>
</evidence>
<evidence type="ECO:0007744" key="5">
    <source>
        <dbReference type="PDB" id="6XBY"/>
    </source>
</evidence>
<evidence type="ECO:0007829" key="6">
    <source>
        <dbReference type="PDB" id="6XBW"/>
    </source>
</evidence>
<dbReference type="EMBL" id="BC111686">
    <property type="protein sequence ID" value="AAI11687.1"/>
    <property type="molecule type" value="mRNA"/>
</dbReference>
<dbReference type="EMBL" id="U43176">
    <property type="protein sequence ID" value="AAB03685.1"/>
    <property type="molecule type" value="mRNA"/>
</dbReference>
<dbReference type="RefSeq" id="NP_001039334.1">
    <property type="nucleotide sequence ID" value="NM_001045869.1"/>
</dbReference>
<dbReference type="PDB" id="6XBW">
    <property type="method" value="EM"/>
    <property type="resolution" value="3.37 A"/>
    <property type="chains" value="L=1-119"/>
</dbReference>
<dbReference type="PDB" id="6XBY">
    <property type="method" value="EM"/>
    <property type="resolution" value="3.79 A"/>
    <property type="chains" value="L=1-119"/>
</dbReference>
<dbReference type="PDB" id="7KHR">
    <property type="method" value="EM"/>
    <property type="resolution" value="3.62 A"/>
    <property type="chains" value="L=1-119"/>
</dbReference>
<dbReference type="PDBsum" id="6XBW"/>
<dbReference type="PDBsum" id="6XBY"/>
<dbReference type="PDBsum" id="7KHR"/>
<dbReference type="EMDB" id="EMD-22121"/>
<dbReference type="EMDB" id="EMD-22122"/>
<dbReference type="EMDB" id="EMD-22880"/>
<dbReference type="SMR" id="Q28029"/>
<dbReference type="CORUM" id="Q28029"/>
<dbReference type="FunCoup" id="Q28029">
    <property type="interactions" value="2840"/>
</dbReference>
<dbReference type="STRING" id="9913.ENSBTAP00000009961"/>
<dbReference type="PaxDb" id="9913-ENSBTAP00000009961"/>
<dbReference type="Ensembl" id="ENSBTAT00000009961.5">
    <property type="protein sequence ID" value="ENSBTAP00000009961.3"/>
    <property type="gene ID" value="ENSBTAG00000007572.5"/>
</dbReference>
<dbReference type="GeneID" id="282405"/>
<dbReference type="KEGG" id="bta:282405"/>
<dbReference type="CTD" id="9296"/>
<dbReference type="VEuPathDB" id="HostDB:ENSBTAG00000007572"/>
<dbReference type="VGNC" id="VGNC:107217">
    <property type="gene designation" value="ATP6V1F"/>
</dbReference>
<dbReference type="eggNOG" id="KOG3432">
    <property type="taxonomic scope" value="Eukaryota"/>
</dbReference>
<dbReference type="GeneTree" id="ENSGT00390000013208"/>
<dbReference type="HOGENOM" id="CLU_135754_0_0_1"/>
<dbReference type="InParanoid" id="Q28029"/>
<dbReference type="OMA" id="IIICQHI"/>
<dbReference type="OrthoDB" id="10261947at2759"/>
<dbReference type="TreeFam" id="TF300080"/>
<dbReference type="Reactome" id="R-BTA-1222556">
    <property type="pathway name" value="ROS and RNS production in phagocytes"/>
</dbReference>
<dbReference type="Reactome" id="R-BTA-77387">
    <property type="pathway name" value="Insulin receptor recycling"/>
</dbReference>
<dbReference type="Reactome" id="R-BTA-917977">
    <property type="pathway name" value="Transferrin endocytosis and recycling"/>
</dbReference>
<dbReference type="Reactome" id="R-BTA-9639288">
    <property type="pathway name" value="Amino acids regulate mTORC1"/>
</dbReference>
<dbReference type="Reactome" id="R-BTA-983712">
    <property type="pathway name" value="Ion channel transport"/>
</dbReference>
<dbReference type="Proteomes" id="UP000009136">
    <property type="component" value="Chromosome 4"/>
</dbReference>
<dbReference type="Bgee" id="ENSBTAG00000007572">
    <property type="expression patterns" value="Expressed in pons and 106 other cell types or tissues"/>
</dbReference>
<dbReference type="GO" id="GO:0030665">
    <property type="term" value="C:clathrin-coated vesicle membrane"/>
    <property type="evidence" value="ECO:0007669"/>
    <property type="project" value="UniProtKB-SubCell"/>
</dbReference>
<dbReference type="GO" id="GO:0016020">
    <property type="term" value="C:membrane"/>
    <property type="evidence" value="ECO:0000318"/>
    <property type="project" value="GO_Central"/>
</dbReference>
<dbReference type="GO" id="GO:0030672">
    <property type="term" value="C:synaptic vesicle membrane"/>
    <property type="evidence" value="ECO:0007669"/>
    <property type="project" value="UniProtKB-SubCell"/>
</dbReference>
<dbReference type="GO" id="GO:0000221">
    <property type="term" value="C:vacuolar proton-transporting V-type ATPase, V1 domain"/>
    <property type="evidence" value="ECO:0000314"/>
    <property type="project" value="UniProtKB"/>
</dbReference>
<dbReference type="GO" id="GO:0046961">
    <property type="term" value="F:proton-transporting ATPase activity, rotational mechanism"/>
    <property type="evidence" value="ECO:0007669"/>
    <property type="project" value="InterPro"/>
</dbReference>
<dbReference type="GO" id="GO:0045851">
    <property type="term" value="P:pH reduction"/>
    <property type="evidence" value="ECO:0000305"/>
    <property type="project" value="UniProtKB"/>
</dbReference>
<dbReference type="GO" id="GO:1902600">
    <property type="term" value="P:proton transmembrane transport"/>
    <property type="evidence" value="ECO:0000305"/>
    <property type="project" value="UniProtKB"/>
</dbReference>
<dbReference type="FunFam" id="3.40.50.10580:FF:000001">
    <property type="entry name" value="V-type proton ATPase subunit F"/>
    <property type="match status" value="1"/>
</dbReference>
<dbReference type="Gene3D" id="3.40.50.10580">
    <property type="entry name" value="ATPase, V1 complex, subunit F"/>
    <property type="match status" value="1"/>
</dbReference>
<dbReference type="InterPro" id="IPR008218">
    <property type="entry name" value="ATPase_V1-cplx_f_g_su"/>
</dbReference>
<dbReference type="InterPro" id="IPR005772">
    <property type="entry name" value="ATPase_V1-cplx_fsu_euk"/>
</dbReference>
<dbReference type="InterPro" id="IPR036906">
    <property type="entry name" value="ATPase_V1_fsu_sf"/>
</dbReference>
<dbReference type="NCBIfam" id="TIGR01101">
    <property type="entry name" value="V_ATP_synt_F"/>
    <property type="match status" value="1"/>
</dbReference>
<dbReference type="PANTHER" id="PTHR13861:SF2">
    <property type="entry name" value="V-TYPE PROTON ATPASE SUBUNIT F"/>
    <property type="match status" value="1"/>
</dbReference>
<dbReference type="PANTHER" id="PTHR13861">
    <property type="entry name" value="VACUOLAR ATP SYNTHASE SUBUNIT F"/>
    <property type="match status" value="1"/>
</dbReference>
<dbReference type="Pfam" id="PF01990">
    <property type="entry name" value="ATP-synt_F"/>
    <property type="match status" value="1"/>
</dbReference>
<dbReference type="PIRSF" id="PIRSF015945">
    <property type="entry name" value="ATPase_V1_F_euk"/>
    <property type="match status" value="1"/>
</dbReference>
<dbReference type="SUPFAM" id="SSF159468">
    <property type="entry name" value="AtpF-like"/>
    <property type="match status" value="1"/>
</dbReference>
<proteinExistence type="evidence at protein level"/>
<gene>
    <name type="primary">ATP6V1F</name>
    <name type="synonym">ATP6S14</name>
    <name type="synonym">VATF</name>
</gene>
<name>VATF_BOVIN</name>
<keyword id="KW-0002">3D-structure</keyword>
<keyword id="KW-0968">Cytoplasmic vesicle</keyword>
<keyword id="KW-0375">Hydrogen ion transport</keyword>
<keyword id="KW-0406">Ion transport</keyword>
<keyword id="KW-0472">Membrane</keyword>
<keyword id="KW-1185">Reference proteome</keyword>
<keyword id="KW-0770">Synapse</keyword>
<keyword id="KW-0813">Transport</keyword>
<accession>Q28029</accession>
<accession>Q2NKR2</accession>
<feature type="chain" id="PRO_0000144798" description="V-type proton ATPase subunit F">
    <location>
        <begin position="1"/>
        <end position="119"/>
    </location>
</feature>
<feature type="strand" evidence="6">
    <location>
        <begin position="7"/>
        <end position="10"/>
    </location>
</feature>
<feature type="helix" evidence="6">
    <location>
        <begin position="14"/>
        <end position="23"/>
    </location>
</feature>
<feature type="turn" evidence="6">
    <location>
        <begin position="30"/>
        <end position="32"/>
    </location>
</feature>
<feature type="strand" evidence="6">
    <location>
        <begin position="33"/>
        <end position="36"/>
    </location>
</feature>
<feature type="helix" evidence="6">
    <location>
        <begin position="45"/>
        <end position="57"/>
    </location>
</feature>
<feature type="strand" evidence="6">
    <location>
        <begin position="59"/>
        <end position="67"/>
    </location>
</feature>
<feature type="helix" evidence="6">
    <location>
        <begin position="68"/>
        <end position="71"/>
    </location>
</feature>
<feature type="helix" evidence="6">
    <location>
        <begin position="75"/>
        <end position="78"/>
    </location>
</feature>
<feature type="strand" evidence="6">
    <location>
        <begin position="84"/>
        <end position="91"/>
    </location>
</feature>
<feature type="turn" evidence="6">
    <location>
        <begin position="103"/>
        <end position="105"/>
    </location>
</feature>
<reference key="1">
    <citation type="submission" date="2006-01" db="EMBL/GenBank/DDBJ databases">
        <authorList>
            <consortium name="NIH - Mammalian Gene Collection (MGC) project"/>
        </authorList>
    </citation>
    <scope>NUCLEOTIDE SEQUENCE [LARGE SCALE MRNA]</scope>
    <source>
        <strain>Hereford</strain>
        <tissue>Heart ventricle</tissue>
    </source>
</reference>
<reference key="2">
    <citation type="journal article" date="1996" name="J. Biol. Chem.">
        <title>Identification of a 14-kDa subunit associated with the catalytic sector of clathrin-coated vesicle H+-ATPase.</title>
        <authorList>
            <person name="Peng S.B."/>
            <person name="Crider B.P."/>
            <person name="Tsai S.J."/>
            <person name="Xie X.S."/>
            <person name="Stone D.K."/>
        </authorList>
    </citation>
    <scope>NUCLEOTIDE SEQUENCE [MRNA] OF 10-119</scope>
    <source>
        <tissue>Brain</tissue>
    </source>
</reference>
<reference evidence="4 5" key="3">
    <citation type="journal article" date="2020" name="Nat. Commun.">
        <title>Cryo-EM structures of intact V-ATPase from bovine brain.</title>
        <authorList>
            <person name="Wang R."/>
            <person name="Long T."/>
            <person name="Hassan A."/>
            <person name="Wang J."/>
            <person name="Sun Y."/>
            <person name="Xie X.S."/>
            <person name="Li X."/>
        </authorList>
    </citation>
    <scope>STRUCTURE BY ELECTRON MICROSCOPY (3.37 ANGSTROMS)</scope>
    <scope>FUNCTION</scope>
    <scope>IDENTIFICATION IN THE V-ATPASE COMPLEX</scope>
    <scope>SUBCELLULAR LOCATION</scope>
    <scope>IDENTIFICATION BY MASS SPECTROMETRY</scope>
    <scope>TISSUE SPECIFICITY</scope>
</reference>